<accession>B0VDI0</accession>
<sequence>MAYSYTEKKRIRKNFGKLPQVMDAPYLLSIQVDSYRTFLQDGKSPKNREDIGLQAAFRSVFPIESYSGNAALEFVEYSLGKPEFDVRECILRGSTYAAPMRVKIRLIIKDRETKSIKDVREQEVYMGEIPLMTENGTFVINGTERVIVSQLHRSPGVFFDHDKGKTHSSGKVLYSARIIPYRGSWLDFEFDAKDLVYVRIDRRRKLLATVVLRALGYNNEQILNLFYEKVPVYLDMGSYQIDLVPERLRGEMAQFDITDNEGKVIVEQGKRINARHVRQMEAAGLTKLSVPDEYLYERITAEDITLRDGEVIAANTLLSHEVMVKLAEGGVKQFNILFTNDIDRGSFVADTLRADLTRDREEALVEIYKVMRPGEPPTKEAAENLFNNLFFSSERYDLSPVGRMKFNRRLGRPYEVGTDQKSREVEGILSHEDIIDVLRTLVEIRNGKGEVDDIDHLGNRRVRSVGEMTENQFRVGLVRVERAVKERLSQAETDNLSPQDLINAKPVAAAIKEFFGSSQLSQFMDQNNPLSEITHKRRVSALGPGGLTRERAGFEVRDVHQTHYGRVCPIETPEGPNIGLINSLSVYAKANDFGFLETPYRKVVDGRVTDDVEYLSAIEEVGTVIAQADSAVDKDGNLTEEFVSVRHQGEFVRMPPEKVTHMDVSAQQVVSVAASLIPFLEHDDANRALMGSNMQRQAVPTLRADKPLVGTGMEANVARDSGVCVIANRGGVIEYVDASRIVIRVNEDEMVAGEAGVDIYNLIKYTRSNQNTCINQNVIVNLGDKVARGDILADGPSTDMGELALGQNMRVAFMTWNGYNYEDSILLSERVLQEDRLTSIHIQELSCVARDTKLGAEEITADIPNVGEAALSKLDESGIVYIGAEVTAGDILVGKVTPKGETQLTPEEKLLRAIFGEKAADVKDSSLRVPSGTKGTVIDVQVFTRDGLEKDDRALAIEKAQLDSYRKDLKEEYKIFEEAARERVIRLLKGQESNGGGSTKRGDKLSEDLLSGLELVDLLEIQPADEAIAERLTQIQVFLKEKSAEIDEKFAEKKRKLATGDELTTGVLKVVKVYLAVKRRIQPGDKMAGRHGNKGVVSNILPVEDMPHDANGVPVDIVLNPLGVPSRMNVGQILETHLGMAAKGLGDKIEKMLKEQRTVLELREFLDKIYNKVGGEQEDLDSLTDEEILALAGNLRAGVPLATPVFDGAEESQIKDLLELADISRTGQTVLFDGRTGEQFDRPVTVGYMYMLKLNHLVDDKMHARSTGSYSLVTQQPLGGKAQFGGQRFGEMEVWALEAYGAAYTLQEMLTVKSDDVEGRTRIYKNIVDGNHYMDPGMPESFNVLTKEIRSLGINIELKNGD</sequence>
<proteinExistence type="inferred from homology"/>
<keyword id="KW-0240">DNA-directed RNA polymerase</keyword>
<keyword id="KW-0548">Nucleotidyltransferase</keyword>
<keyword id="KW-0804">Transcription</keyword>
<keyword id="KW-0808">Transferase</keyword>
<reference key="1">
    <citation type="journal article" date="2008" name="PLoS ONE">
        <title>Comparative analysis of Acinetobacters: three genomes for three lifestyles.</title>
        <authorList>
            <person name="Vallenet D."/>
            <person name="Nordmann P."/>
            <person name="Barbe V."/>
            <person name="Poirel L."/>
            <person name="Mangenot S."/>
            <person name="Bataille E."/>
            <person name="Dossat C."/>
            <person name="Gas S."/>
            <person name="Kreimeyer A."/>
            <person name="Lenoble P."/>
            <person name="Oztas S."/>
            <person name="Poulain J."/>
            <person name="Segurens B."/>
            <person name="Robert C."/>
            <person name="Abergel C."/>
            <person name="Claverie J.-M."/>
            <person name="Raoult D."/>
            <person name="Medigue C."/>
            <person name="Weissenbach J."/>
            <person name="Cruveiller S."/>
        </authorList>
    </citation>
    <scope>NUCLEOTIDE SEQUENCE [LARGE SCALE GENOMIC DNA]</scope>
    <source>
        <strain>AYE</strain>
    </source>
</reference>
<comment type="function">
    <text evidence="1">DNA-dependent RNA polymerase catalyzes the transcription of DNA into RNA using the four ribonucleoside triphosphates as substrates.</text>
</comment>
<comment type="catalytic activity">
    <reaction evidence="1">
        <text>RNA(n) + a ribonucleoside 5'-triphosphate = RNA(n+1) + diphosphate</text>
        <dbReference type="Rhea" id="RHEA:21248"/>
        <dbReference type="Rhea" id="RHEA-COMP:14527"/>
        <dbReference type="Rhea" id="RHEA-COMP:17342"/>
        <dbReference type="ChEBI" id="CHEBI:33019"/>
        <dbReference type="ChEBI" id="CHEBI:61557"/>
        <dbReference type="ChEBI" id="CHEBI:140395"/>
        <dbReference type="EC" id="2.7.7.6"/>
    </reaction>
</comment>
<comment type="subunit">
    <text evidence="1">The RNAP catalytic core consists of 2 alpha, 1 beta, 1 beta' and 1 omega subunit. When a sigma factor is associated with the core the holoenzyme is formed, which can initiate transcription.</text>
</comment>
<comment type="similarity">
    <text evidence="1">Belongs to the RNA polymerase beta chain family.</text>
</comment>
<gene>
    <name evidence="1" type="primary">rpoB</name>
    <name type="ordered locus">ABAYE3489</name>
</gene>
<organism>
    <name type="scientific">Acinetobacter baumannii (strain AYE)</name>
    <dbReference type="NCBI Taxonomy" id="509173"/>
    <lineage>
        <taxon>Bacteria</taxon>
        <taxon>Pseudomonadati</taxon>
        <taxon>Pseudomonadota</taxon>
        <taxon>Gammaproteobacteria</taxon>
        <taxon>Moraxellales</taxon>
        <taxon>Moraxellaceae</taxon>
        <taxon>Acinetobacter</taxon>
        <taxon>Acinetobacter calcoaceticus/baumannii complex</taxon>
    </lineage>
</organism>
<name>RPOB_ACIBY</name>
<protein>
    <recommendedName>
        <fullName evidence="1">DNA-directed RNA polymerase subunit beta</fullName>
        <shortName evidence="1">RNAP subunit beta</shortName>
        <ecNumber evidence="1">2.7.7.6</ecNumber>
    </recommendedName>
    <alternativeName>
        <fullName evidence="1">RNA polymerase subunit beta</fullName>
    </alternativeName>
    <alternativeName>
        <fullName evidence="1">Transcriptase subunit beta</fullName>
    </alternativeName>
</protein>
<evidence type="ECO:0000255" key="1">
    <source>
        <dbReference type="HAMAP-Rule" id="MF_01321"/>
    </source>
</evidence>
<feature type="chain" id="PRO_1000141651" description="DNA-directed RNA polymerase subunit beta">
    <location>
        <begin position="1"/>
        <end position="1362"/>
    </location>
</feature>
<dbReference type="EC" id="2.7.7.6" evidence="1"/>
<dbReference type="EMBL" id="CU459141">
    <property type="protein sequence ID" value="CAM88277.1"/>
    <property type="molecule type" value="Genomic_DNA"/>
</dbReference>
<dbReference type="RefSeq" id="WP_000331899.1">
    <property type="nucleotide sequence ID" value="NZ_JBDGFB010000003.1"/>
</dbReference>
<dbReference type="SMR" id="B0VDI0"/>
<dbReference type="EnsemblBacteria" id="CAM88277">
    <property type="protein sequence ID" value="CAM88277"/>
    <property type="gene ID" value="ABAYE3489"/>
</dbReference>
<dbReference type="GeneID" id="92892284"/>
<dbReference type="KEGG" id="aby:ABAYE3489"/>
<dbReference type="HOGENOM" id="CLU_000524_4_3_6"/>
<dbReference type="GO" id="GO:0000428">
    <property type="term" value="C:DNA-directed RNA polymerase complex"/>
    <property type="evidence" value="ECO:0007669"/>
    <property type="project" value="UniProtKB-KW"/>
</dbReference>
<dbReference type="GO" id="GO:0003677">
    <property type="term" value="F:DNA binding"/>
    <property type="evidence" value="ECO:0007669"/>
    <property type="project" value="UniProtKB-UniRule"/>
</dbReference>
<dbReference type="GO" id="GO:0003899">
    <property type="term" value="F:DNA-directed RNA polymerase activity"/>
    <property type="evidence" value="ECO:0007669"/>
    <property type="project" value="UniProtKB-UniRule"/>
</dbReference>
<dbReference type="GO" id="GO:0032549">
    <property type="term" value="F:ribonucleoside binding"/>
    <property type="evidence" value="ECO:0007669"/>
    <property type="project" value="InterPro"/>
</dbReference>
<dbReference type="GO" id="GO:0006351">
    <property type="term" value="P:DNA-templated transcription"/>
    <property type="evidence" value="ECO:0007669"/>
    <property type="project" value="UniProtKB-UniRule"/>
</dbReference>
<dbReference type="CDD" id="cd00653">
    <property type="entry name" value="RNA_pol_B_RPB2"/>
    <property type="match status" value="1"/>
</dbReference>
<dbReference type="FunFam" id="2.40.50.100:FF:000006">
    <property type="entry name" value="DNA-directed RNA polymerase subunit beta"/>
    <property type="match status" value="1"/>
</dbReference>
<dbReference type="FunFam" id="2.40.50.150:FF:000001">
    <property type="entry name" value="DNA-directed RNA polymerase subunit beta"/>
    <property type="match status" value="1"/>
</dbReference>
<dbReference type="FunFam" id="3.90.1110.10:FF:000001">
    <property type="entry name" value="DNA-directed RNA polymerase subunit beta"/>
    <property type="match status" value="1"/>
</dbReference>
<dbReference type="FunFam" id="3.90.1800.10:FF:000001">
    <property type="entry name" value="DNA-directed RNA polymerase subunit beta"/>
    <property type="match status" value="1"/>
</dbReference>
<dbReference type="Gene3D" id="2.40.50.100">
    <property type="match status" value="1"/>
</dbReference>
<dbReference type="Gene3D" id="2.40.50.150">
    <property type="match status" value="1"/>
</dbReference>
<dbReference type="Gene3D" id="3.90.1100.10">
    <property type="match status" value="2"/>
</dbReference>
<dbReference type="Gene3D" id="2.30.150.10">
    <property type="entry name" value="DNA-directed RNA polymerase, beta subunit, external 1 domain"/>
    <property type="match status" value="1"/>
</dbReference>
<dbReference type="Gene3D" id="2.40.270.10">
    <property type="entry name" value="DNA-directed RNA polymerase, subunit 2, domain 6"/>
    <property type="match status" value="2"/>
</dbReference>
<dbReference type="Gene3D" id="3.90.1800.10">
    <property type="entry name" value="RNA polymerase alpha subunit dimerisation domain"/>
    <property type="match status" value="1"/>
</dbReference>
<dbReference type="Gene3D" id="3.90.1110.10">
    <property type="entry name" value="RNA polymerase Rpb2, domain 2"/>
    <property type="match status" value="2"/>
</dbReference>
<dbReference type="HAMAP" id="MF_01321">
    <property type="entry name" value="RNApol_bact_RpoB"/>
    <property type="match status" value="1"/>
</dbReference>
<dbReference type="InterPro" id="IPR042107">
    <property type="entry name" value="DNA-dir_RNA_pol_bsu_ext_1_sf"/>
</dbReference>
<dbReference type="InterPro" id="IPR019462">
    <property type="entry name" value="DNA-dir_RNA_pol_bsu_external_1"/>
</dbReference>
<dbReference type="InterPro" id="IPR015712">
    <property type="entry name" value="DNA-dir_RNA_pol_su2"/>
</dbReference>
<dbReference type="InterPro" id="IPR007120">
    <property type="entry name" value="DNA-dir_RNAP_su2_dom"/>
</dbReference>
<dbReference type="InterPro" id="IPR037033">
    <property type="entry name" value="DNA-dir_RNAP_su2_hyb_sf"/>
</dbReference>
<dbReference type="InterPro" id="IPR010243">
    <property type="entry name" value="RNA_pol_bsu_bac"/>
</dbReference>
<dbReference type="InterPro" id="IPR007121">
    <property type="entry name" value="RNA_pol_bsu_CS"/>
</dbReference>
<dbReference type="InterPro" id="IPR007644">
    <property type="entry name" value="RNA_pol_bsu_protrusion"/>
</dbReference>
<dbReference type="InterPro" id="IPR007642">
    <property type="entry name" value="RNA_pol_Rpb2_2"/>
</dbReference>
<dbReference type="InterPro" id="IPR037034">
    <property type="entry name" value="RNA_pol_Rpb2_2_sf"/>
</dbReference>
<dbReference type="InterPro" id="IPR007645">
    <property type="entry name" value="RNA_pol_Rpb2_3"/>
</dbReference>
<dbReference type="InterPro" id="IPR007641">
    <property type="entry name" value="RNA_pol_Rpb2_7"/>
</dbReference>
<dbReference type="InterPro" id="IPR014724">
    <property type="entry name" value="RNA_pol_RPB2_OB-fold"/>
</dbReference>
<dbReference type="NCBIfam" id="NF001616">
    <property type="entry name" value="PRK00405.1"/>
    <property type="match status" value="1"/>
</dbReference>
<dbReference type="NCBIfam" id="TIGR02013">
    <property type="entry name" value="rpoB"/>
    <property type="match status" value="1"/>
</dbReference>
<dbReference type="PANTHER" id="PTHR20856">
    <property type="entry name" value="DNA-DIRECTED RNA POLYMERASE I SUBUNIT 2"/>
    <property type="match status" value="1"/>
</dbReference>
<dbReference type="Pfam" id="PF04563">
    <property type="entry name" value="RNA_pol_Rpb2_1"/>
    <property type="match status" value="1"/>
</dbReference>
<dbReference type="Pfam" id="PF04561">
    <property type="entry name" value="RNA_pol_Rpb2_2"/>
    <property type="match status" value="2"/>
</dbReference>
<dbReference type="Pfam" id="PF04565">
    <property type="entry name" value="RNA_pol_Rpb2_3"/>
    <property type="match status" value="1"/>
</dbReference>
<dbReference type="Pfam" id="PF10385">
    <property type="entry name" value="RNA_pol_Rpb2_45"/>
    <property type="match status" value="1"/>
</dbReference>
<dbReference type="Pfam" id="PF00562">
    <property type="entry name" value="RNA_pol_Rpb2_6"/>
    <property type="match status" value="1"/>
</dbReference>
<dbReference type="Pfam" id="PF04560">
    <property type="entry name" value="RNA_pol_Rpb2_7"/>
    <property type="match status" value="1"/>
</dbReference>
<dbReference type="SUPFAM" id="SSF64484">
    <property type="entry name" value="beta and beta-prime subunits of DNA dependent RNA-polymerase"/>
    <property type="match status" value="1"/>
</dbReference>
<dbReference type="PROSITE" id="PS01166">
    <property type="entry name" value="RNA_POL_BETA"/>
    <property type="match status" value="1"/>
</dbReference>